<accession>Q62771</accession>
<organism>
    <name type="scientific">Rattus norvegicus</name>
    <name type="common">Rat</name>
    <dbReference type="NCBI Taxonomy" id="10116"/>
    <lineage>
        <taxon>Eukaryota</taxon>
        <taxon>Metazoa</taxon>
        <taxon>Chordata</taxon>
        <taxon>Craniata</taxon>
        <taxon>Vertebrata</taxon>
        <taxon>Euteleostomi</taxon>
        <taxon>Mammalia</taxon>
        <taxon>Eutheria</taxon>
        <taxon>Euarchontoglires</taxon>
        <taxon>Glires</taxon>
        <taxon>Rodentia</taxon>
        <taxon>Myomorpha</taxon>
        <taxon>Muroidea</taxon>
        <taxon>Muridae</taxon>
        <taxon>Murinae</taxon>
        <taxon>Rattus</taxon>
    </lineage>
</organism>
<sequence>MAGWIQAQQLQGDALRQMQVLYGQHFPIEVRHYLAQWIESQPWDAIDLDNPQDRGQATQLLEGLVQELQKKAEHQVGEDGFVLKIKLGHYATQLQNTYDRCPMELVRCIRHILYNEQRLVREANNCSSPAGVLVDAMSQKHLQINQTFEELRLITQDTESELKKLQQTQEYFIIQYQESLRIQAQFGQLAQLNPQERMSRETALQQKQVSLETWLQREAQTLQQYRVELVEKHQKTLQLLRKQQTIILDDELIQWKRGQQLAGNGGPPEGSLDVLQSWCEKLAEIIWQNRQQIRRAEHLCQQLPIPGPVEEMLAEVNATITDIISALVTSTFIIEKQPPQVLKTQTKFAATVRLLVGGKLNVHMNPPQVKATIISEQQAKSLLKNENTRNDYSGEILNNCCVMEYHQATGTLSAHFRNMSLKRIKRADRRGAESVTEEKFTVLFESQFSVGSNELVFQVKTLSLPVVVIVHGSQDHNATATVLWDNAFAEPGRVPFAVPDKVLWPQLCEALNMKFKAEVQSNRGLTKENLVFLAQKLFNRRSNHLEDYNSMSVSWSQFNRENLPGWNYTFWQWFDGVMEVLKKHHKPHWNDGAILGFVNKQQAHDLLINKPDGTFLLRFSDSEIGGITIAWKFDSPDRNLWNLKPFTTRDFSIRSLADRLGDLNYLIYVFPDRPKDEVFAKYYTPVLAKAVDGYVKPQIKQVVPEFVNASADAGANATYMDQAPSPVVCPQAHYNMYPPNPDPVLDQDGEFDLDETMDVARHVEELLRRPMDSLDPRLSPPAGLFTSARSSLS</sequence>
<reference key="1">
    <citation type="journal article" date="1995" name="Mol. Endocrinol.">
        <title>Regulation of mammary gland factor/Stat5a during mammary gland development.</title>
        <authorList>
            <person name="Kazansky A.V."/>
            <person name="Raught B."/>
            <person name="Lindsey S.M."/>
            <person name="Wang Y.-F."/>
            <person name="Rosen J.M."/>
        </authorList>
    </citation>
    <scope>NUCLEOTIDE SEQUENCE [MRNA] (ISOFORMS STAT5A1 AND STAT5A2)</scope>
    <source>
        <tissue>Mammary gland</tissue>
    </source>
</reference>
<reference key="2">
    <citation type="journal article" date="2008" name="PLoS ONE">
        <title>Analysis of STAT1 activation by six FGFR3 mutants associated with skeletal dysplasia undermines dominant role of STAT1 in FGFR3 signaling in cartilage.</title>
        <authorList>
            <person name="Krejci P."/>
            <person name="Salazar L."/>
            <person name="Kashiwada T.A."/>
            <person name="Chlebova K."/>
            <person name="Salasova A."/>
            <person name="Thompson L.M."/>
            <person name="Bryja V."/>
            <person name="Kozubik A."/>
            <person name="Wilcox W.R."/>
        </authorList>
    </citation>
    <scope>FUNCTION</scope>
    <scope>PHOSPHORYLATION AT TYR-694 IN RESPONSE TO CONSTITUTIVELY ACTIVATED FGFR3</scope>
</reference>
<reference key="3">
    <citation type="journal article" date="2012" name="Nat. Commun.">
        <title>Quantitative maps of protein phosphorylation sites across 14 different rat organs and tissues.</title>
        <authorList>
            <person name="Lundby A."/>
            <person name="Secher A."/>
            <person name="Lage K."/>
            <person name="Nordsborg N.B."/>
            <person name="Dmytriyev A."/>
            <person name="Lundby C."/>
            <person name="Olsen J.V."/>
        </authorList>
    </citation>
    <scope>PHOSPHORYLATION [LARGE SCALE ANALYSIS] AT TYR-694 AND SER-779</scope>
    <scope>IDENTIFICATION BY MASS SPECTROMETRY [LARGE SCALE ANALYSIS]</scope>
</reference>
<feature type="chain" id="PRO_0000182426" description="Signal transducer and activator of transcription 5A">
    <location>
        <begin position="1"/>
        <end position="793"/>
    </location>
</feature>
<feature type="domain" description="SH2" evidence="5">
    <location>
        <begin position="589"/>
        <end position="686"/>
    </location>
</feature>
<feature type="region of interest" description="Disordered" evidence="6">
    <location>
        <begin position="772"/>
        <end position="793"/>
    </location>
</feature>
<feature type="modified residue" description="Phosphotyrosine" evidence="3">
    <location>
        <position position="90"/>
    </location>
</feature>
<feature type="modified residue" description="Phosphoserine" evidence="3">
    <location>
        <position position="128"/>
    </location>
</feature>
<feature type="modified residue" description="Phosphotyrosine" evidence="3">
    <location>
        <position position="682"/>
    </location>
</feature>
<feature type="modified residue" description="Phosphotyrosine; by JAK2" evidence="7 10">
    <location>
        <position position="694"/>
    </location>
</feature>
<feature type="modified residue" description="Phosphoserine" evidence="10">
    <location>
        <position position="779"/>
    </location>
</feature>
<feature type="splice variant" id="VSP_006288" description="In isoform Stat5A2." evidence="8">
    <original>N</original>
    <variation>K</variation>
    <location>
        <position position="740"/>
    </location>
</feature>
<feature type="splice variant" id="VSP_006289" description="In isoform Stat5A2." evidence="8">
    <location>
        <begin position="741"/>
        <end position="793"/>
    </location>
</feature>
<proteinExistence type="evidence at protein level"/>
<keyword id="KW-0010">Activator</keyword>
<keyword id="KW-0025">Alternative splicing</keyword>
<keyword id="KW-0963">Cytoplasm</keyword>
<keyword id="KW-0238">DNA-binding</keyword>
<keyword id="KW-0421">Lactation</keyword>
<keyword id="KW-0539">Nucleus</keyword>
<keyword id="KW-0597">Phosphoprotein</keyword>
<keyword id="KW-1185">Reference proteome</keyword>
<keyword id="KW-0727">SH2 domain</keyword>
<keyword id="KW-0804">Transcription</keyword>
<keyword id="KW-0805">Transcription regulation</keyword>
<keyword id="KW-0832">Ubl conjugation</keyword>
<comment type="function">
    <text evidence="7">Carries out a dual function: signal transduction and activation of transcription. Mediates cellular responses to the cytokine KITLG/SCF and other growth factors. May mediate cellular responses to activated FGFR1, FGFR2, FGFR3 and FGFR4. Binds to the GAS element and activates PRL-induced transcription. Regulates the expression of milk proteins during lactation.</text>
</comment>
<comment type="subunit">
    <text evidence="1 3">Forms a homodimer or a heterodimer with a related family member. Binds NR3C1. Interacts with NCOA1 and SOCS7. Interacts with ERBB4 (By similarity). Interacts with EBF4.</text>
</comment>
<comment type="subcellular location">
    <subcellularLocation>
        <location evidence="1">Cytoplasm</location>
    </subcellularLocation>
    <subcellularLocation>
        <location evidence="1">Nucleus</location>
    </subcellularLocation>
    <text evidence="1">Mostly cytoplasmic during pregnancy, whereas it becomes predominantly nuclear during early lactation. It is translocated into the nucleus in response to phosphorylation (By similarity).</text>
</comment>
<comment type="alternative products">
    <event type="alternative splicing"/>
    <isoform>
        <id>Q62771-1</id>
        <name>Stat5A1</name>
        <sequence type="displayed"/>
    </isoform>
    <isoform>
        <id>Q62771-2</id>
        <name>Stat5A2</name>
        <sequence type="described" ref="VSP_006288 VSP_006289"/>
    </isoform>
</comment>
<comment type="tissue specificity">
    <text>Expressed in heart, lung, and weakly in muscle.</text>
</comment>
<comment type="developmental stage">
    <text>Detected both in virgin rats and after mammary gland involution. The level of STAT5A increases constantly during pregnancy, but decreases at the onset of lactation and remains lows throughout lactation.</text>
</comment>
<comment type="PTM">
    <text evidence="4">ISGylated.</text>
</comment>
<comment type="PTM">
    <text evidence="2 3 4">Tyrosine phosphorylated in response to KITLG/SCF, IL2, IL3, IL7, IL15, CSF2/GMCSF, GH1, PRL, EPO and THPO (By similarity). Activated KIT promotes phosphorylation on tyrosine residues and subsequent translocation to the nucleus (By similarity). Tyrosine phosphorylated in response to constitutively activated FGFR1, FGFR2, FGFR3 and FGFR4 (PubMed:22673903). Tyrosine phosphorylation is required for DNA-binding activity and dimerization. Serine phosphorylation is also required for maximal transcriptional activity (By similarity). Tyrosine phosphorylated in response to signaling via activated FLT3; wild-type FLT3 results in much weaker phosphorylation than constitutively activated mutant FLT3. Alternatively, can be phosphorylated by JAK2 at Tyr-694 (By similarity).</text>
</comment>
<comment type="similarity">
    <text evidence="9">Belongs to the transcription factor STAT family.</text>
</comment>
<name>STA5A_RAT</name>
<gene>
    <name type="primary">Stat5a</name>
    <name type="synonym">Mgf</name>
</gene>
<evidence type="ECO:0000250" key="1"/>
<evidence type="ECO:0000250" key="2">
    <source>
        <dbReference type="UniProtKB" id="P40763"/>
    </source>
</evidence>
<evidence type="ECO:0000250" key="3">
    <source>
        <dbReference type="UniProtKB" id="P42229"/>
    </source>
</evidence>
<evidence type="ECO:0000250" key="4">
    <source>
        <dbReference type="UniProtKB" id="P42230"/>
    </source>
</evidence>
<evidence type="ECO:0000255" key="5">
    <source>
        <dbReference type="PROSITE-ProRule" id="PRU00191"/>
    </source>
</evidence>
<evidence type="ECO:0000256" key="6">
    <source>
        <dbReference type="SAM" id="MobiDB-lite"/>
    </source>
</evidence>
<evidence type="ECO:0000269" key="7">
    <source>
    </source>
</evidence>
<evidence type="ECO:0000303" key="8">
    <source>
    </source>
</evidence>
<evidence type="ECO:0000305" key="9"/>
<evidence type="ECO:0007744" key="10">
    <source>
    </source>
</evidence>
<protein>
    <recommendedName>
        <fullName>Signal transducer and activator of transcription 5A</fullName>
    </recommendedName>
    <alternativeName>
        <fullName>Mammary gland factor</fullName>
    </alternativeName>
</protein>
<dbReference type="EMBL" id="U24175">
    <property type="protein sequence ID" value="AAA98843.1"/>
    <property type="molecule type" value="mRNA"/>
</dbReference>
<dbReference type="RefSeq" id="NP_058760.1">
    <property type="nucleotide sequence ID" value="NM_017064.1"/>
</dbReference>
<dbReference type="SMR" id="Q62771"/>
<dbReference type="BioGRID" id="247025">
    <property type="interactions" value="3"/>
</dbReference>
<dbReference type="FunCoup" id="Q62771">
    <property type="interactions" value="1060"/>
</dbReference>
<dbReference type="STRING" id="10116.ENSRNOP00000026662"/>
<dbReference type="GlyGen" id="Q62771">
    <property type="glycosylation" value="1 site, 1 O-linked glycan (1 site)"/>
</dbReference>
<dbReference type="iPTMnet" id="Q62771"/>
<dbReference type="PhosphoSitePlus" id="Q62771"/>
<dbReference type="jPOST" id="Q62771"/>
<dbReference type="PaxDb" id="10116-ENSRNOP00000026662"/>
<dbReference type="GeneID" id="24918"/>
<dbReference type="KEGG" id="rno:24918"/>
<dbReference type="UCSC" id="RGD:3773">
    <molecule id="Q62771-1"/>
    <property type="organism name" value="rat"/>
</dbReference>
<dbReference type="AGR" id="RGD:3773"/>
<dbReference type="CTD" id="6776"/>
<dbReference type="RGD" id="3773">
    <property type="gene designation" value="Stat5a"/>
</dbReference>
<dbReference type="eggNOG" id="KOG3667">
    <property type="taxonomic scope" value="Eukaryota"/>
</dbReference>
<dbReference type="InParanoid" id="Q62771"/>
<dbReference type="OrthoDB" id="19300at2759"/>
<dbReference type="Reactome" id="R-RNO-1251985">
    <property type="pathway name" value="Nuclear signaling by ERBB4"/>
</dbReference>
<dbReference type="Reactome" id="R-RNO-1266695">
    <property type="pathway name" value="Interleukin-7 signaling"/>
</dbReference>
<dbReference type="Reactome" id="R-RNO-1433557">
    <property type="pathway name" value="Signaling by SCF-KIT"/>
</dbReference>
<dbReference type="Reactome" id="R-RNO-186763">
    <property type="pathway name" value="Downstream signal transduction"/>
</dbReference>
<dbReference type="Reactome" id="R-RNO-512988">
    <property type="pathway name" value="Interleukin-3, Interleukin-5 and GM-CSF signaling"/>
</dbReference>
<dbReference type="Reactome" id="R-RNO-8854691">
    <property type="pathway name" value="Interleukin-20 family signaling"/>
</dbReference>
<dbReference type="Reactome" id="R-RNO-8983432">
    <property type="pathway name" value="Interleukin-15 signaling"/>
</dbReference>
<dbReference type="Reactome" id="R-RNO-8985947">
    <property type="pathway name" value="Interleukin-9 signaling"/>
</dbReference>
<dbReference type="Reactome" id="R-RNO-9020558">
    <property type="pathway name" value="Interleukin-2 signaling"/>
</dbReference>
<dbReference type="Reactome" id="R-RNO-9020958">
    <property type="pathway name" value="Interleukin-21 signaling"/>
</dbReference>
<dbReference type="Reactome" id="R-RNO-982772">
    <property type="pathway name" value="Growth hormone receptor signaling"/>
</dbReference>
<dbReference type="PRO" id="PR:Q62771"/>
<dbReference type="Proteomes" id="UP000002494">
    <property type="component" value="Unplaced"/>
</dbReference>
<dbReference type="GO" id="GO:0005737">
    <property type="term" value="C:cytoplasm"/>
    <property type="evidence" value="ECO:0000266"/>
    <property type="project" value="RGD"/>
</dbReference>
<dbReference type="GO" id="GO:0005829">
    <property type="term" value="C:cytosol"/>
    <property type="evidence" value="ECO:0000304"/>
    <property type="project" value="Reactome"/>
</dbReference>
<dbReference type="GO" id="GO:0005634">
    <property type="term" value="C:nucleus"/>
    <property type="evidence" value="ECO:0000266"/>
    <property type="project" value="RGD"/>
</dbReference>
<dbReference type="GO" id="GO:0090575">
    <property type="term" value="C:RNA polymerase II transcription regulator complex"/>
    <property type="evidence" value="ECO:0000318"/>
    <property type="project" value="GO_Central"/>
</dbReference>
<dbReference type="GO" id="GO:0003677">
    <property type="term" value="F:DNA binding"/>
    <property type="evidence" value="ECO:0000266"/>
    <property type="project" value="RGD"/>
</dbReference>
<dbReference type="GO" id="GO:0001228">
    <property type="term" value="F:DNA-binding transcription activator activity, RNA polymerase II-specific"/>
    <property type="evidence" value="ECO:0000266"/>
    <property type="project" value="RGD"/>
</dbReference>
<dbReference type="GO" id="GO:0003700">
    <property type="term" value="F:DNA-binding transcription factor activity"/>
    <property type="evidence" value="ECO:0000314"/>
    <property type="project" value="RGD"/>
</dbReference>
<dbReference type="GO" id="GO:0000981">
    <property type="term" value="F:DNA-binding transcription factor activity, RNA polymerase II-specific"/>
    <property type="evidence" value="ECO:0000318"/>
    <property type="project" value="GO_Central"/>
</dbReference>
<dbReference type="GO" id="GO:0140297">
    <property type="term" value="F:DNA-binding transcription factor binding"/>
    <property type="evidence" value="ECO:0000266"/>
    <property type="project" value="RGD"/>
</dbReference>
<dbReference type="GO" id="GO:0003690">
    <property type="term" value="F:double-stranded DNA binding"/>
    <property type="evidence" value="ECO:0000314"/>
    <property type="project" value="RGD"/>
</dbReference>
<dbReference type="GO" id="GO:0042301">
    <property type="term" value="F:phosphate ion binding"/>
    <property type="evidence" value="ECO:0000266"/>
    <property type="project" value="RGD"/>
</dbReference>
<dbReference type="GO" id="GO:0000978">
    <property type="term" value="F:RNA polymerase II cis-regulatory region sequence-specific DNA binding"/>
    <property type="evidence" value="ECO:0000266"/>
    <property type="project" value="RGD"/>
</dbReference>
<dbReference type="GO" id="GO:0043565">
    <property type="term" value="F:sequence-specific DNA binding"/>
    <property type="evidence" value="ECO:0000314"/>
    <property type="project" value="RGD"/>
</dbReference>
<dbReference type="GO" id="GO:0050798">
    <property type="term" value="P:activated T cell proliferation"/>
    <property type="evidence" value="ECO:0000266"/>
    <property type="project" value="RGD"/>
</dbReference>
<dbReference type="GO" id="GO:0030183">
    <property type="term" value="P:B cell differentiation"/>
    <property type="evidence" value="ECO:0000266"/>
    <property type="project" value="RGD"/>
</dbReference>
<dbReference type="GO" id="GO:0008283">
    <property type="term" value="P:cell population proliferation"/>
    <property type="evidence" value="ECO:0000266"/>
    <property type="project" value="RGD"/>
</dbReference>
<dbReference type="GO" id="GO:0007259">
    <property type="term" value="P:cell surface receptor signaling pathway via JAK-STAT"/>
    <property type="evidence" value="ECO:0000314"/>
    <property type="project" value="RGD"/>
</dbReference>
<dbReference type="GO" id="GO:0071345">
    <property type="term" value="P:cellular response to cytokine stimulus"/>
    <property type="evidence" value="ECO:0000314"/>
    <property type="project" value="MGI"/>
</dbReference>
<dbReference type="GO" id="GO:0097011">
    <property type="term" value="P:cellular response to granulocyte macrophage colony-stimulating factor stimulus"/>
    <property type="evidence" value="ECO:0000266"/>
    <property type="project" value="RGD"/>
</dbReference>
<dbReference type="GO" id="GO:0019221">
    <property type="term" value="P:cytokine-mediated signaling pathway"/>
    <property type="evidence" value="ECO:0000266"/>
    <property type="project" value="RGD"/>
</dbReference>
<dbReference type="GO" id="GO:0006952">
    <property type="term" value="P:defense response"/>
    <property type="evidence" value="ECO:0000318"/>
    <property type="project" value="GO_Central"/>
</dbReference>
<dbReference type="GO" id="GO:0046543">
    <property type="term" value="P:development of secondary female sexual characteristics"/>
    <property type="evidence" value="ECO:0000266"/>
    <property type="project" value="RGD"/>
</dbReference>
<dbReference type="GO" id="GO:0046544">
    <property type="term" value="P:development of secondary male sexual characteristics"/>
    <property type="evidence" value="ECO:0000266"/>
    <property type="project" value="RGD"/>
</dbReference>
<dbReference type="GO" id="GO:0030222">
    <property type="term" value="P:eosinophil differentiation"/>
    <property type="evidence" value="ECO:0000266"/>
    <property type="project" value="RGD"/>
</dbReference>
<dbReference type="GO" id="GO:0060742">
    <property type="term" value="P:epithelial cell differentiation involved in prostate gland development"/>
    <property type="evidence" value="ECO:0000266"/>
    <property type="project" value="RGD"/>
</dbReference>
<dbReference type="GO" id="GO:0030218">
    <property type="term" value="P:erythrocyte differentiation"/>
    <property type="evidence" value="ECO:0000266"/>
    <property type="project" value="RGD"/>
</dbReference>
<dbReference type="GO" id="GO:0007565">
    <property type="term" value="P:female pregnancy"/>
    <property type="evidence" value="ECO:0000266"/>
    <property type="project" value="RGD"/>
</dbReference>
<dbReference type="GO" id="GO:0042492">
    <property type="term" value="P:gamma-delta T cell differentiation"/>
    <property type="evidence" value="ECO:0000266"/>
    <property type="project" value="RGD"/>
</dbReference>
<dbReference type="GO" id="GO:0060397">
    <property type="term" value="P:growth hormone receptor signaling pathway via JAK-STAT"/>
    <property type="evidence" value="ECO:0000266"/>
    <property type="project" value="RGD"/>
</dbReference>
<dbReference type="GO" id="GO:0035723">
    <property type="term" value="P:interleukin-15-mediated signaling pathway"/>
    <property type="evidence" value="ECO:0000266"/>
    <property type="project" value="RGD"/>
</dbReference>
<dbReference type="GO" id="GO:0038110">
    <property type="term" value="P:interleukin-2-mediated signaling pathway"/>
    <property type="evidence" value="ECO:0000266"/>
    <property type="project" value="RGD"/>
</dbReference>
<dbReference type="GO" id="GO:0038156">
    <property type="term" value="P:interleukin-3-mediated signaling pathway"/>
    <property type="evidence" value="ECO:0000266"/>
    <property type="project" value="RGD"/>
</dbReference>
<dbReference type="GO" id="GO:0035771">
    <property type="term" value="P:interleukin-4-mediated signaling pathway"/>
    <property type="evidence" value="ECO:0000266"/>
    <property type="project" value="RGD"/>
</dbReference>
<dbReference type="GO" id="GO:0038043">
    <property type="term" value="P:interleukin-5-mediated signaling pathway"/>
    <property type="evidence" value="ECO:0000266"/>
    <property type="project" value="RGD"/>
</dbReference>
<dbReference type="GO" id="GO:0038111">
    <property type="term" value="P:interleukin-7-mediated signaling pathway"/>
    <property type="evidence" value="ECO:0000266"/>
    <property type="project" value="RGD"/>
</dbReference>
<dbReference type="GO" id="GO:0038113">
    <property type="term" value="P:interleukin-9-mediated signaling pathway"/>
    <property type="evidence" value="ECO:0000266"/>
    <property type="project" value="RGD"/>
</dbReference>
<dbReference type="GO" id="GO:0007595">
    <property type="term" value="P:lactation"/>
    <property type="evidence" value="ECO:0000270"/>
    <property type="project" value="RGD"/>
</dbReference>
<dbReference type="GO" id="GO:0019915">
    <property type="term" value="P:lipid storage"/>
    <property type="evidence" value="ECO:0000266"/>
    <property type="project" value="RGD"/>
</dbReference>
<dbReference type="GO" id="GO:0001553">
    <property type="term" value="P:luteinization"/>
    <property type="evidence" value="ECO:0000266"/>
    <property type="project" value="RGD"/>
</dbReference>
<dbReference type="GO" id="GO:0030098">
    <property type="term" value="P:lymphocyte differentiation"/>
    <property type="evidence" value="ECO:0000266"/>
    <property type="project" value="RGD"/>
</dbReference>
<dbReference type="GO" id="GO:0030879">
    <property type="term" value="P:mammary gland development"/>
    <property type="evidence" value="ECO:0000266"/>
    <property type="project" value="RGD"/>
</dbReference>
<dbReference type="GO" id="GO:0061180">
    <property type="term" value="P:mammary gland epithelium development"/>
    <property type="evidence" value="ECO:0000266"/>
    <property type="project" value="RGD"/>
</dbReference>
<dbReference type="GO" id="GO:0060056">
    <property type="term" value="P:mammary gland involution"/>
    <property type="evidence" value="ECO:0000314"/>
    <property type="project" value="RGD"/>
</dbReference>
<dbReference type="GO" id="GO:0033024">
    <property type="term" value="P:mast cell apoptotic process"/>
    <property type="evidence" value="ECO:0000266"/>
    <property type="project" value="RGD"/>
</dbReference>
<dbReference type="GO" id="GO:0060374">
    <property type="term" value="P:mast cell differentiation"/>
    <property type="evidence" value="ECO:0000266"/>
    <property type="project" value="RGD"/>
</dbReference>
<dbReference type="GO" id="GO:0070662">
    <property type="term" value="P:mast cell proliferation"/>
    <property type="evidence" value="ECO:0000266"/>
    <property type="project" value="RGD"/>
</dbReference>
<dbReference type="GO" id="GO:0000278">
    <property type="term" value="P:mitotic cell cycle"/>
    <property type="evidence" value="ECO:0000266"/>
    <property type="project" value="RGD"/>
</dbReference>
<dbReference type="GO" id="GO:0033028">
    <property type="term" value="P:myeloid cell apoptotic process"/>
    <property type="evidence" value="ECO:0000266"/>
    <property type="project" value="RGD"/>
</dbReference>
<dbReference type="GO" id="GO:0001779">
    <property type="term" value="P:natural killer cell differentiation"/>
    <property type="evidence" value="ECO:0000266"/>
    <property type="project" value="RGD"/>
</dbReference>
<dbReference type="GO" id="GO:0042267">
    <property type="term" value="P:natural killer cell mediated cytotoxicity"/>
    <property type="evidence" value="ECO:0000266"/>
    <property type="project" value="RGD"/>
</dbReference>
<dbReference type="GO" id="GO:0045647">
    <property type="term" value="P:negative regulation of erythrocyte differentiation"/>
    <property type="evidence" value="ECO:0000266"/>
    <property type="project" value="RGD"/>
</dbReference>
<dbReference type="GO" id="GO:0033026">
    <property type="term" value="P:negative regulation of mast cell apoptotic process"/>
    <property type="evidence" value="ECO:0000266"/>
    <property type="project" value="RGD"/>
</dbReference>
<dbReference type="GO" id="GO:0033033">
    <property type="term" value="P:negative regulation of myeloid cell apoptotic process"/>
    <property type="evidence" value="ECO:0000266"/>
    <property type="project" value="RGD"/>
</dbReference>
<dbReference type="GO" id="GO:2000329">
    <property type="term" value="P:negative regulation of T-helper 17 cell lineage commitment"/>
    <property type="evidence" value="ECO:0000266"/>
    <property type="project" value="RGD"/>
</dbReference>
<dbReference type="GO" id="GO:0048541">
    <property type="term" value="P:Peyer's patch development"/>
    <property type="evidence" value="ECO:0000266"/>
    <property type="project" value="RGD"/>
</dbReference>
<dbReference type="GO" id="GO:0042104">
    <property type="term" value="P:positive regulation of activated T cell proliferation"/>
    <property type="evidence" value="ECO:0000266"/>
    <property type="project" value="RGD"/>
</dbReference>
<dbReference type="GO" id="GO:0045579">
    <property type="term" value="P:positive regulation of B cell differentiation"/>
    <property type="evidence" value="ECO:0000266"/>
    <property type="project" value="RGD"/>
</dbReference>
<dbReference type="GO" id="GO:0043536">
    <property type="term" value="P:positive regulation of blood vessel endothelial cell migration"/>
    <property type="evidence" value="ECO:0000266"/>
    <property type="project" value="RGD"/>
</dbReference>
<dbReference type="GO" id="GO:0008284">
    <property type="term" value="P:positive regulation of cell population proliferation"/>
    <property type="evidence" value="ECO:0000266"/>
    <property type="project" value="RGD"/>
</dbReference>
<dbReference type="GO" id="GO:0001938">
    <property type="term" value="P:positive regulation of endothelial cell proliferation"/>
    <property type="evidence" value="ECO:0000266"/>
    <property type="project" value="RGD"/>
</dbReference>
<dbReference type="GO" id="GO:0045588">
    <property type="term" value="P:positive regulation of gamma-delta T cell differentiation"/>
    <property type="evidence" value="ECO:0000266"/>
    <property type="project" value="RGD"/>
</dbReference>
<dbReference type="GO" id="GO:0050729">
    <property type="term" value="P:positive regulation of inflammatory response"/>
    <property type="evidence" value="ECO:0000266"/>
    <property type="project" value="RGD"/>
</dbReference>
<dbReference type="GO" id="GO:0032743">
    <property type="term" value="P:positive regulation of interleukin-2 production"/>
    <property type="evidence" value="ECO:0000266"/>
    <property type="project" value="RGD"/>
</dbReference>
<dbReference type="GO" id="GO:0045621">
    <property type="term" value="P:positive regulation of lymphocyte differentiation"/>
    <property type="evidence" value="ECO:0000266"/>
    <property type="project" value="RGD"/>
</dbReference>
<dbReference type="GO" id="GO:0060376">
    <property type="term" value="P:positive regulation of mast cell differentiation"/>
    <property type="evidence" value="ECO:0000266"/>
    <property type="project" value="RGD"/>
</dbReference>
<dbReference type="GO" id="GO:0070668">
    <property type="term" value="P:positive regulation of mast cell proliferation"/>
    <property type="evidence" value="ECO:0000266"/>
    <property type="project" value="RGD"/>
</dbReference>
<dbReference type="GO" id="GO:0045931">
    <property type="term" value="P:positive regulation of mitotic cell cycle"/>
    <property type="evidence" value="ECO:0000266"/>
    <property type="project" value="RGD"/>
</dbReference>
<dbReference type="GO" id="GO:0040018">
    <property type="term" value="P:positive regulation of multicellular organism growth"/>
    <property type="evidence" value="ECO:0000266"/>
    <property type="project" value="RGD"/>
</dbReference>
<dbReference type="GO" id="GO:0032825">
    <property type="term" value="P:positive regulation of natural killer cell differentiation"/>
    <property type="evidence" value="ECO:0000266"/>
    <property type="project" value="RGD"/>
</dbReference>
<dbReference type="GO" id="GO:0045954">
    <property type="term" value="P:positive regulation of natural killer cell mediated cytotoxicity"/>
    <property type="evidence" value="ECO:0000266"/>
    <property type="project" value="RGD"/>
</dbReference>
<dbReference type="GO" id="GO:0042102">
    <property type="term" value="P:positive regulation of T cell proliferation"/>
    <property type="evidence" value="ECO:0000266"/>
    <property type="project" value="RGD"/>
</dbReference>
<dbReference type="GO" id="GO:0045944">
    <property type="term" value="P:positive regulation of transcription by RNA polymerase II"/>
    <property type="evidence" value="ECO:0000266"/>
    <property type="project" value="RGD"/>
</dbReference>
<dbReference type="GO" id="GO:0060740">
    <property type="term" value="P:prostate gland epithelium morphogenesis"/>
    <property type="evidence" value="ECO:0000266"/>
    <property type="project" value="RGD"/>
</dbReference>
<dbReference type="GO" id="GO:0038026">
    <property type="term" value="P:reelin-mediated signaling pathway"/>
    <property type="evidence" value="ECO:0000266"/>
    <property type="project" value="RGD"/>
</dbReference>
<dbReference type="GO" id="GO:0030155">
    <property type="term" value="P:regulation of cell adhesion"/>
    <property type="evidence" value="ECO:0000266"/>
    <property type="project" value="RGD"/>
</dbReference>
<dbReference type="GO" id="GO:0042127">
    <property type="term" value="P:regulation of cell population proliferation"/>
    <property type="evidence" value="ECO:0000318"/>
    <property type="project" value="GO_Central"/>
</dbReference>
<dbReference type="GO" id="GO:0006355">
    <property type="term" value="P:regulation of DNA-templated transcription"/>
    <property type="evidence" value="ECO:0000304"/>
    <property type="project" value="RGD"/>
</dbReference>
<dbReference type="GO" id="GO:0030856">
    <property type="term" value="P:regulation of epithelial cell differentiation"/>
    <property type="evidence" value="ECO:0000266"/>
    <property type="project" value="RGD"/>
</dbReference>
<dbReference type="GO" id="GO:0040014">
    <property type="term" value="P:regulation of multicellular organism growth"/>
    <property type="evidence" value="ECO:0000266"/>
    <property type="project" value="RGD"/>
</dbReference>
<dbReference type="GO" id="GO:0019218">
    <property type="term" value="P:regulation of steroid metabolic process"/>
    <property type="evidence" value="ECO:0000266"/>
    <property type="project" value="RGD"/>
</dbReference>
<dbReference type="GO" id="GO:0006357">
    <property type="term" value="P:regulation of transcription by RNA polymerase II"/>
    <property type="evidence" value="ECO:0000266"/>
    <property type="project" value="RGD"/>
</dbReference>
<dbReference type="GO" id="GO:0045471">
    <property type="term" value="P:response to ethanol"/>
    <property type="evidence" value="ECO:0000270"/>
    <property type="project" value="RGD"/>
</dbReference>
<dbReference type="GO" id="GO:0031667">
    <property type="term" value="P:response to nutrient levels"/>
    <property type="evidence" value="ECO:0000270"/>
    <property type="project" value="RGD"/>
</dbReference>
<dbReference type="GO" id="GO:0043434">
    <property type="term" value="P:response to peptide hormone"/>
    <property type="evidence" value="ECO:0000266"/>
    <property type="project" value="RGD"/>
</dbReference>
<dbReference type="GO" id="GO:0033077">
    <property type="term" value="P:T cell differentiation in thymus"/>
    <property type="evidence" value="ECO:0000266"/>
    <property type="project" value="RGD"/>
</dbReference>
<dbReference type="GO" id="GO:0043029">
    <property type="term" value="P:T cell homeostasis"/>
    <property type="evidence" value="ECO:0000266"/>
    <property type="project" value="RGD"/>
</dbReference>
<dbReference type="GO" id="GO:0042098">
    <property type="term" value="P:T cell proliferation"/>
    <property type="evidence" value="ECO:0000266"/>
    <property type="project" value="RGD"/>
</dbReference>
<dbReference type="GO" id="GO:0019530">
    <property type="term" value="P:taurine metabolic process"/>
    <property type="evidence" value="ECO:0000266"/>
    <property type="project" value="RGD"/>
</dbReference>
<dbReference type="GO" id="GO:0038163">
    <property type="term" value="P:thrombopoietin-mediated signaling pathway"/>
    <property type="evidence" value="ECO:0000266"/>
    <property type="project" value="RGD"/>
</dbReference>
<dbReference type="GO" id="GO:0006366">
    <property type="term" value="P:transcription by RNA polymerase II"/>
    <property type="evidence" value="ECO:0000314"/>
    <property type="project" value="RGD"/>
</dbReference>
<dbReference type="CDD" id="cd10421">
    <property type="entry name" value="SH2_STAT5a"/>
    <property type="match status" value="1"/>
</dbReference>
<dbReference type="CDD" id="cd16855">
    <property type="entry name" value="STAT5_CCD"/>
    <property type="match status" value="1"/>
</dbReference>
<dbReference type="CDD" id="cd16849">
    <property type="entry name" value="STAT5_DBD"/>
    <property type="match status" value="1"/>
</dbReference>
<dbReference type="FunFam" id="1.10.532.10:FF:000002">
    <property type="entry name" value="Signal transducer and activator of transcription"/>
    <property type="match status" value="1"/>
</dbReference>
<dbReference type="FunFam" id="1.20.1050.20:FF:000002">
    <property type="entry name" value="Signal transducer and activator of transcription"/>
    <property type="match status" value="1"/>
</dbReference>
<dbReference type="FunFam" id="2.60.40.630:FF:000002">
    <property type="entry name" value="Signal transducer and activator of transcription"/>
    <property type="match status" value="1"/>
</dbReference>
<dbReference type="FunFam" id="3.30.505.10:FF:000025">
    <property type="entry name" value="Signal transducer and activator of transcription"/>
    <property type="match status" value="1"/>
</dbReference>
<dbReference type="FunFam" id="1.10.238.10:FF:000029">
    <property type="entry name" value="Signal transducer and transcription activator 6"/>
    <property type="match status" value="1"/>
</dbReference>
<dbReference type="Gene3D" id="1.10.238.10">
    <property type="entry name" value="EF-hand"/>
    <property type="match status" value="1"/>
</dbReference>
<dbReference type="Gene3D" id="3.30.505.10">
    <property type="entry name" value="SH2 domain"/>
    <property type="match status" value="1"/>
</dbReference>
<dbReference type="Gene3D" id="1.20.1050.20">
    <property type="entry name" value="STAT transcription factor, all-alpha domain"/>
    <property type="match status" value="1"/>
</dbReference>
<dbReference type="Gene3D" id="2.60.40.630">
    <property type="entry name" value="STAT transcription factor, DNA-binding domain"/>
    <property type="match status" value="1"/>
</dbReference>
<dbReference type="Gene3D" id="1.10.532.10">
    <property type="entry name" value="STAT transcription factor, N-terminal domain"/>
    <property type="match status" value="1"/>
</dbReference>
<dbReference type="InterPro" id="IPR008967">
    <property type="entry name" value="p53-like_TF_DNA-bd_sf"/>
</dbReference>
<dbReference type="InterPro" id="IPR000980">
    <property type="entry name" value="SH2"/>
</dbReference>
<dbReference type="InterPro" id="IPR036860">
    <property type="entry name" value="SH2_dom_sf"/>
</dbReference>
<dbReference type="InterPro" id="IPR001217">
    <property type="entry name" value="STAT"/>
</dbReference>
<dbReference type="InterPro" id="IPR046994">
    <property type="entry name" value="STAT5_CCD"/>
</dbReference>
<dbReference type="InterPro" id="IPR035858">
    <property type="entry name" value="STAT5a/5b_DBD"/>
</dbReference>
<dbReference type="InterPro" id="IPR048988">
    <property type="entry name" value="STAT_linker"/>
</dbReference>
<dbReference type="InterPro" id="IPR036535">
    <property type="entry name" value="STAT_N_sf"/>
</dbReference>
<dbReference type="InterPro" id="IPR013800">
    <property type="entry name" value="STAT_TF_alpha"/>
</dbReference>
<dbReference type="InterPro" id="IPR015988">
    <property type="entry name" value="STAT_TF_coiled-coil"/>
</dbReference>
<dbReference type="InterPro" id="IPR013801">
    <property type="entry name" value="STAT_TF_DNA-bd"/>
</dbReference>
<dbReference type="InterPro" id="IPR012345">
    <property type="entry name" value="STAT_TF_DNA-bd_N"/>
</dbReference>
<dbReference type="InterPro" id="IPR013799">
    <property type="entry name" value="STAT_TF_prot_interaction"/>
</dbReference>
<dbReference type="PANTHER" id="PTHR11801">
    <property type="entry name" value="SIGNAL TRANSDUCER AND ACTIVATOR OF TRANSCRIPTION"/>
    <property type="match status" value="1"/>
</dbReference>
<dbReference type="Pfam" id="PF00017">
    <property type="entry name" value="SH2"/>
    <property type="match status" value="1"/>
</dbReference>
<dbReference type="Pfam" id="PF01017">
    <property type="entry name" value="STAT_alpha"/>
    <property type="match status" value="1"/>
</dbReference>
<dbReference type="Pfam" id="PF02864">
    <property type="entry name" value="STAT_bind"/>
    <property type="match status" value="1"/>
</dbReference>
<dbReference type="Pfam" id="PF02865">
    <property type="entry name" value="STAT_int"/>
    <property type="match status" value="1"/>
</dbReference>
<dbReference type="Pfam" id="PF21354">
    <property type="entry name" value="STAT_linker"/>
    <property type="match status" value="1"/>
</dbReference>
<dbReference type="SMART" id="SM00252">
    <property type="entry name" value="SH2"/>
    <property type="match status" value="1"/>
</dbReference>
<dbReference type="SMART" id="SM00964">
    <property type="entry name" value="STAT_int"/>
    <property type="match status" value="1"/>
</dbReference>
<dbReference type="SUPFAM" id="SSF49417">
    <property type="entry name" value="p53-like transcription factors"/>
    <property type="match status" value="1"/>
</dbReference>
<dbReference type="SUPFAM" id="SSF55550">
    <property type="entry name" value="SH2 domain"/>
    <property type="match status" value="1"/>
</dbReference>
<dbReference type="SUPFAM" id="SSF47655">
    <property type="entry name" value="STAT"/>
    <property type="match status" value="1"/>
</dbReference>
<dbReference type="SUPFAM" id="SSF48092">
    <property type="entry name" value="Transcription factor STAT-4 N-domain"/>
    <property type="match status" value="1"/>
</dbReference>
<dbReference type="PROSITE" id="PS50001">
    <property type="entry name" value="SH2"/>
    <property type="match status" value="1"/>
</dbReference>